<protein>
    <recommendedName>
        <fullName>Gamma-secretase subunit PEN-2</fullName>
    </recommendedName>
    <alternativeName>
        <fullName>Presenilin enhancer protein 2</fullName>
    </alternativeName>
</protein>
<organism>
    <name type="scientific">Bos taurus</name>
    <name type="common">Bovine</name>
    <dbReference type="NCBI Taxonomy" id="9913"/>
    <lineage>
        <taxon>Eukaryota</taxon>
        <taxon>Metazoa</taxon>
        <taxon>Chordata</taxon>
        <taxon>Craniata</taxon>
        <taxon>Vertebrata</taxon>
        <taxon>Euteleostomi</taxon>
        <taxon>Mammalia</taxon>
        <taxon>Eutheria</taxon>
        <taxon>Laurasiatheria</taxon>
        <taxon>Artiodactyla</taxon>
        <taxon>Ruminantia</taxon>
        <taxon>Pecora</taxon>
        <taxon>Bovidae</taxon>
        <taxon>Bovinae</taxon>
        <taxon>Bos</taxon>
    </lineage>
</organism>
<keyword id="KW-1003">Cell membrane</keyword>
<keyword id="KW-0256">Endoplasmic reticulum</keyword>
<keyword id="KW-0333">Golgi apparatus</keyword>
<keyword id="KW-0472">Membrane</keyword>
<keyword id="KW-0914">Notch signaling pathway</keyword>
<keyword id="KW-1185">Reference proteome</keyword>
<keyword id="KW-0812">Transmembrane</keyword>
<keyword id="KW-1133">Transmembrane helix</keyword>
<accession>Q5G235</accession>
<accession>Q5PXY8</accession>
<name>PEN2_BOVIN</name>
<gene>
    <name type="primary">PSENEN</name>
    <name type="synonym">PEN2</name>
</gene>
<reference key="1">
    <citation type="submission" date="2004-11" db="EMBL/GenBank/DDBJ databases">
        <title>Bovine presenilin enhancer 2.</title>
        <authorList>
            <person name="Jeong Y.-H."/>
            <person name="Lee S.-M."/>
            <person name="Park H.-Y."/>
            <person name="Yoon D.-H."/>
            <person name="Chung E.-R."/>
            <person name="Kang M.-J."/>
        </authorList>
    </citation>
    <scope>NUCLEOTIDE SEQUENCE [MRNA]</scope>
</reference>
<reference key="2">
    <citation type="submission" date="2004-12" db="EMBL/GenBank/DDBJ databases">
        <title>Estimating probability of parentage in U.S. beef and dairy cattle with single nucleotide polymorphisms.</title>
        <authorList>
            <person name="Heaton M.P."/>
            <person name="Clawson M.L."/>
            <person name="Snelling W.M."/>
            <person name="Keele J.W."/>
            <person name="Harhay G.P."/>
            <person name="Wiedmann R.T."/>
            <person name="Bennett G.L."/>
            <person name="Smith T.P.L."/>
            <person name="Stone R.T."/>
            <person name="Freking B.A."/>
            <person name="Van Tassell C.P."/>
            <person name="Sonstegard T.S."/>
            <person name="Gasbarre L.C."/>
            <person name="Carr J."/>
            <person name="DiBello P."/>
            <person name="Kumar M."/>
            <person name="Lee M.S."/>
            <person name="Murthy J."/>
            <person name="Otto J."/>
            <person name="Salisbury B."/>
            <person name="Schulz V."/>
            <person name="Tracy R."/>
            <person name="Hawk D.A."/>
            <person name="Kalbfleisch T."/>
            <person name="Laegreid W.W."/>
        </authorList>
    </citation>
    <scope>NUCLEOTIDE SEQUENCE [GENOMIC DNA]</scope>
</reference>
<reference key="3">
    <citation type="submission" date="2005-08" db="EMBL/GenBank/DDBJ databases">
        <authorList>
            <consortium name="NIH - Mammalian Gene Collection (MGC) project"/>
        </authorList>
    </citation>
    <scope>NUCLEOTIDE SEQUENCE [LARGE SCALE MRNA]</scope>
    <source>
        <strain>Crossbred X Angus</strain>
        <tissue>Ileum</tissue>
    </source>
</reference>
<feature type="chain" id="PRO_0000244424" description="Gamma-secretase subunit PEN-2">
    <location>
        <begin position="1"/>
        <end position="101"/>
    </location>
</feature>
<feature type="topological domain" description="Cytoplasmic" evidence="1">
    <location>
        <begin position="1"/>
        <end position="17"/>
    </location>
</feature>
<feature type="intramembrane region" description="Helical" evidence="1">
    <location>
        <begin position="18"/>
        <end position="36"/>
    </location>
</feature>
<feature type="topological domain" description="Cytoplasmic" evidence="1">
    <location>
        <begin position="37"/>
        <end position="57"/>
    </location>
</feature>
<feature type="transmembrane region" description="Helical" evidence="1">
    <location>
        <begin position="58"/>
        <end position="78"/>
    </location>
</feature>
<feature type="topological domain" description="Lumenal" evidence="1">
    <location>
        <begin position="79"/>
        <end position="101"/>
    </location>
</feature>
<feature type="sequence conflict" description="In Ref. 1; AAV84001." evidence="2" ref="1">
    <original>G</original>
    <variation>C</variation>
    <location>
        <position position="63"/>
    </location>
</feature>
<comment type="function">
    <text evidence="1">Essential subunit of the gamma-secretase complex, an endoprotease complex that catalyzes the intramembrane cleavage of integral membrane proteins such as Notch receptors and APP (amyloid-beta precursor protein). The gamma-secretase complex plays a role in Notch and Wnt signaling cascades and regulation of downstream processes via its role in processing key regulatory proteins, and by regulating cytosolic CTNNB1 levels. PSENEN modulates both endoproteolysis of presenilin and gamma-secretase activity.</text>
</comment>
<comment type="subunit">
    <text evidence="1">The functional gamma-secretase complex is composed of at least four polypeptides: a presenilin homodimer (PSEN1 or PSEN2), nicastrin (NCSTN), APH1 (APH1A or APH1B) and PSENEN.</text>
</comment>
<comment type="subcellular location">
    <subcellularLocation>
        <location evidence="1">Endoplasmic reticulum membrane</location>
        <topology evidence="1">Multi-pass membrane protein</topology>
    </subcellularLocation>
    <subcellularLocation>
        <location evidence="1">Golgi apparatus</location>
        <location evidence="1">Golgi stack membrane</location>
        <topology evidence="1">Multi-pass membrane protein</topology>
    </subcellularLocation>
    <subcellularLocation>
        <location evidence="1">Cell membrane</location>
        <topology evidence="1">Multi-pass membrane protein</topology>
    </subcellularLocation>
    <subcellularLocation>
        <location evidence="1">Membrane</location>
        <topology evidence="1">Multi-pass membrane protein</topology>
    </subcellularLocation>
    <text evidence="1">Predominantly located in the endoplasmic reticulum and in the cis-Golgi.</text>
</comment>
<comment type="similarity">
    <text evidence="2">Belongs to the PEN-2 family.</text>
</comment>
<comment type="caution">
    <text evidence="2">3D-structure analysis of the human homolog indicates that the membrane topology differs from the predictions. Contrary to predictions, the N-terminus contains two short helices that dip into the membrane, but do not cross it. The C-terminus contains the single transmembrane helix. This gives rise to a topology where the N-terminus is cytoplasmic and the C-terminus is lumenal.</text>
</comment>
<evidence type="ECO:0000250" key="1">
    <source>
        <dbReference type="UniProtKB" id="Q9NZ42"/>
    </source>
</evidence>
<evidence type="ECO:0000305" key="2"/>
<proteinExistence type="inferred from homology"/>
<sequence>MNLERVSNEEKLNLCRKYYLGGFAFLPFLWLVNIFWFFREAFIVPAYTEQSQIKGYVWRSAVGFFLWVIVLSTWITIFQIYRPRWGALGDYLSFTIPLGTP</sequence>
<dbReference type="EMBL" id="AY821679">
    <property type="protein sequence ID" value="AAV84001.1"/>
    <property type="molecule type" value="mRNA"/>
</dbReference>
<dbReference type="EMBL" id="AY863214">
    <property type="protein sequence ID" value="AAW65540.1"/>
    <property type="molecule type" value="Genomic_DNA"/>
</dbReference>
<dbReference type="EMBL" id="BC102375">
    <property type="protein sequence ID" value="AAI02376.1"/>
    <property type="molecule type" value="mRNA"/>
</dbReference>
<dbReference type="RefSeq" id="NP_001008669.1">
    <property type="nucleotide sequence ID" value="NM_001008669.1"/>
</dbReference>
<dbReference type="RefSeq" id="XP_010813044.1">
    <property type="nucleotide sequence ID" value="XM_010814742.4"/>
</dbReference>
<dbReference type="SMR" id="Q5G235"/>
<dbReference type="FunCoup" id="Q5G235">
    <property type="interactions" value="2176"/>
</dbReference>
<dbReference type="STRING" id="9913.ENSBTAP00000024745"/>
<dbReference type="PaxDb" id="9913-ENSBTAP00000024745"/>
<dbReference type="GeneID" id="493993"/>
<dbReference type="KEGG" id="bta:493993"/>
<dbReference type="CTD" id="55851"/>
<dbReference type="VEuPathDB" id="HostDB:ENSBTAG00000018593"/>
<dbReference type="eggNOG" id="KOG3402">
    <property type="taxonomic scope" value="Eukaryota"/>
</dbReference>
<dbReference type="HOGENOM" id="CLU_124142_2_0_1"/>
<dbReference type="InParanoid" id="Q5G235"/>
<dbReference type="OMA" id="KLYLCKW"/>
<dbReference type="OrthoDB" id="524898at2759"/>
<dbReference type="TreeFam" id="TF313116"/>
<dbReference type="Reactome" id="R-BTA-1251985">
    <property type="pathway name" value="Nuclear signaling by ERBB4"/>
</dbReference>
<dbReference type="Reactome" id="R-BTA-193692">
    <property type="pathway name" value="Regulated proteolysis of p75NTR"/>
</dbReference>
<dbReference type="Reactome" id="R-BTA-205043">
    <property type="pathway name" value="NRIF signals cell death from the nucleus"/>
</dbReference>
<dbReference type="Reactome" id="R-BTA-3928665">
    <property type="pathway name" value="EPH-ephrin mediated repulsion of cells"/>
</dbReference>
<dbReference type="Reactome" id="R-BTA-9839383">
    <property type="pathway name" value="TGFBR3 PTM regulation"/>
</dbReference>
<dbReference type="Proteomes" id="UP000009136">
    <property type="component" value="Chromosome 18"/>
</dbReference>
<dbReference type="Bgee" id="ENSBTAG00000018593">
    <property type="expression patterns" value="Expressed in anterior segment of eyeball and 102 other cell types or tissues"/>
</dbReference>
<dbReference type="GO" id="GO:0005789">
    <property type="term" value="C:endoplasmic reticulum membrane"/>
    <property type="evidence" value="ECO:0007669"/>
    <property type="project" value="UniProtKB-SubCell"/>
</dbReference>
<dbReference type="GO" id="GO:0070765">
    <property type="term" value="C:gamma-secretase complex"/>
    <property type="evidence" value="ECO:0000250"/>
    <property type="project" value="UniProtKB"/>
</dbReference>
<dbReference type="GO" id="GO:0032580">
    <property type="term" value="C:Golgi cisterna membrane"/>
    <property type="evidence" value="ECO:0007669"/>
    <property type="project" value="UniProtKB-SubCell"/>
</dbReference>
<dbReference type="GO" id="GO:0016020">
    <property type="term" value="C:membrane"/>
    <property type="evidence" value="ECO:0000250"/>
    <property type="project" value="UniProtKB"/>
</dbReference>
<dbReference type="GO" id="GO:0042982">
    <property type="term" value="P:amyloid precursor protein metabolic process"/>
    <property type="evidence" value="ECO:0000250"/>
    <property type="project" value="UniProtKB"/>
</dbReference>
<dbReference type="GO" id="GO:0034205">
    <property type="term" value="P:amyloid-beta formation"/>
    <property type="evidence" value="ECO:0000250"/>
    <property type="project" value="UniProtKB"/>
</dbReference>
<dbReference type="GO" id="GO:0007220">
    <property type="term" value="P:Notch receptor processing"/>
    <property type="evidence" value="ECO:0000318"/>
    <property type="project" value="GO_Central"/>
</dbReference>
<dbReference type="GO" id="GO:0007219">
    <property type="term" value="P:Notch signaling pathway"/>
    <property type="evidence" value="ECO:0007669"/>
    <property type="project" value="UniProtKB-KW"/>
</dbReference>
<dbReference type="InterPro" id="IPR019379">
    <property type="entry name" value="Gamma_Secretase_Asp_P_PEN2"/>
</dbReference>
<dbReference type="PANTHER" id="PTHR16318">
    <property type="entry name" value="GAMMA-SECRETASE SUBUNIT PEN-2"/>
    <property type="match status" value="1"/>
</dbReference>
<dbReference type="PANTHER" id="PTHR16318:SF0">
    <property type="entry name" value="GAMMA-SECRETASE SUBUNIT PEN-2"/>
    <property type="match status" value="1"/>
</dbReference>
<dbReference type="Pfam" id="PF10251">
    <property type="entry name" value="PEN-2"/>
    <property type="match status" value="1"/>
</dbReference>